<name>SIBD1_CUPSA</name>
<comment type="function">
    <text evidence="2">Has a role in the innate immune system.</text>
</comment>
<comment type="subcellular location">
    <subcellularLocation>
        <location>Secreted</location>
    </subcellularLocation>
</comment>
<comment type="tissue specificity">
    <text evidence="2">Expressed in hemocytes.</text>
</comment>
<comment type="mass spectrometry"/>
<comment type="miscellaneous">
    <text evidence="4">Does not reveal bactericidal activities against E.coli and S.aureus.</text>
</comment>
<protein>
    <recommendedName>
        <fullName>Single insulin-like growth factor-binding domain protein-1</fullName>
        <shortName>SIBD-1</shortName>
    </recommendedName>
</protein>
<sequence>MKTLFVFAVGIMLSMRASAFTCPECRPELCGDPGYCEYGTTKDACDCCPVCFQGPGGYCGGPEDVFGICADGFACVPLVGERDSQDPEIVGTCVKIP</sequence>
<feature type="signal peptide" evidence="2">
    <location>
        <begin position="1"/>
        <end position="19"/>
    </location>
</feature>
<feature type="chain" id="PRO_0000425732" description="Single insulin-like growth factor-binding domain protein-1">
    <location>
        <begin position="20"/>
        <end position="97"/>
    </location>
</feature>
<feature type="domain" description="IGFBP N-terminal" evidence="1">
    <location>
        <begin position="20"/>
        <end position="96"/>
    </location>
</feature>
<feature type="glycosylation site" description="O-linked (GalNAc...) threonine" evidence="2 3">
    <location>
        <position position="21"/>
    </location>
</feature>
<feature type="disulfide bond" evidence="1">
    <location>
        <begin position="22"/>
        <end position="45"/>
    </location>
</feature>
<feature type="disulfide bond" evidence="1">
    <location>
        <begin position="25"/>
        <end position="47"/>
    </location>
</feature>
<feature type="disulfide bond" evidence="1">
    <location>
        <begin position="30"/>
        <end position="48"/>
    </location>
</feature>
<feature type="disulfide bond" evidence="1">
    <location>
        <begin position="36"/>
        <end position="51"/>
    </location>
</feature>
<feature type="disulfide bond" evidence="1">
    <location>
        <begin position="59"/>
        <end position="75"/>
    </location>
</feature>
<feature type="disulfide bond" evidence="1">
    <location>
        <begin position="69"/>
        <end position="93"/>
    </location>
</feature>
<feature type="helix" evidence="6">
    <location>
        <begin position="27"/>
        <end position="29"/>
    </location>
</feature>
<feature type="strand" evidence="6">
    <location>
        <begin position="40"/>
        <end position="42"/>
    </location>
</feature>
<feature type="strand" evidence="5">
    <location>
        <begin position="44"/>
        <end position="46"/>
    </location>
</feature>
<feature type="strand" evidence="6">
    <location>
        <begin position="48"/>
        <end position="51"/>
    </location>
</feature>
<feature type="strand" evidence="6">
    <location>
        <begin position="57"/>
        <end position="61"/>
    </location>
</feature>
<feature type="helix" evidence="6">
    <location>
        <begin position="62"/>
        <end position="64"/>
    </location>
</feature>
<feature type="strand" evidence="6">
    <location>
        <begin position="73"/>
        <end position="77"/>
    </location>
</feature>
<feature type="strand" evidence="6">
    <location>
        <begin position="90"/>
        <end position="95"/>
    </location>
</feature>
<reference key="1">
    <citation type="journal article" date="2011" name="Insect Biochem. Mol. Biol.">
        <title>Purification, cDNA structure and biological significance of a single insulin-like growth factor-binding domain protein (SIBD-1) identified in the hemocytes of the spider Cupiennius salei.</title>
        <authorList>
            <person name="Kuhn-Nentwig L."/>
            <person name="Largiader C.R."/>
            <person name="Streitberger K."/>
            <person name="Chandru S."/>
            <person name="Baumann T."/>
            <person name="Kampfer U."/>
            <person name="Schaller J."/>
            <person name="Schurch S."/>
            <person name="Nentwig W."/>
        </authorList>
    </citation>
    <scope>NUCLEOTIDE SEQUENCE [MRNA]</scope>
    <scope>PROTEIN SEQUENCE OF 20-50</scope>
    <scope>FUNCTION</scope>
    <scope>TISSUE SPECIFICITY</scope>
    <scope>MASS SPECTROMETRY</scope>
    <scope>GLYCOSYLATION AT THR-21</scope>
    <source>
        <tissue>Hemocyte</tissue>
    </source>
</reference>
<reference key="2">
    <citation type="journal article" date="2012" name="Proteins">
        <title>Structural and biochemical characterization of native and recombinant single insulin-like growth factor-binding domain protein (SIBD-1) from the Central American hunting spider Cupiennius salei (Ctenidae).</title>
        <authorList>
            <person name="Trachsel C."/>
            <person name="Widmer C."/>
            <person name="Kampfer U."/>
            <person name="Buhr C."/>
            <person name="Baumann T."/>
            <person name="Kuhn-Nentwig L."/>
            <person name="Schurch S."/>
            <person name="Schaller J."/>
            <person name="Baumann U."/>
        </authorList>
    </citation>
    <scope>X-RAY CRYSTALLOGRAPHY (1.40 ANGSTROMS) OF 20-97</scope>
    <scope>GLYCOSYLATION AT THR-21</scope>
</reference>
<evidence type="ECO:0000255" key="1">
    <source>
        <dbReference type="PROSITE-ProRule" id="PRU00653"/>
    </source>
</evidence>
<evidence type="ECO:0000269" key="2">
    <source>
    </source>
</evidence>
<evidence type="ECO:0000269" key="3">
    <source>
    </source>
</evidence>
<evidence type="ECO:0000305" key="4">
    <source>
    </source>
</evidence>
<evidence type="ECO:0007829" key="5">
    <source>
        <dbReference type="PDB" id="3ZXB"/>
    </source>
</evidence>
<evidence type="ECO:0007829" key="6">
    <source>
        <dbReference type="PDB" id="3ZXC"/>
    </source>
</evidence>
<organism>
    <name type="scientific">Cupiennius salei</name>
    <name type="common">American wandering spider</name>
    <dbReference type="NCBI Taxonomy" id="6928"/>
    <lineage>
        <taxon>Eukaryota</taxon>
        <taxon>Metazoa</taxon>
        <taxon>Ecdysozoa</taxon>
        <taxon>Arthropoda</taxon>
        <taxon>Chelicerata</taxon>
        <taxon>Arachnida</taxon>
        <taxon>Araneae</taxon>
        <taxon>Araneomorphae</taxon>
        <taxon>Entelegynae</taxon>
        <taxon>Lycosoidea</taxon>
        <taxon>Ctenidae</taxon>
        <taxon>Cupiennius</taxon>
    </lineage>
</organism>
<keyword id="KW-0002">3D-structure</keyword>
<keyword id="KW-0903">Direct protein sequencing</keyword>
<keyword id="KW-1015">Disulfide bond</keyword>
<keyword id="KW-0325">Glycoprotein</keyword>
<keyword id="KW-0391">Immunity</keyword>
<keyword id="KW-0399">Innate immunity</keyword>
<keyword id="KW-0964">Secreted</keyword>
<keyword id="KW-0732">Signal</keyword>
<accession>G4V4F9</accession>
<dbReference type="EMBL" id="HE580153">
    <property type="protein sequence ID" value="CCD22032.1"/>
    <property type="molecule type" value="mRNA"/>
</dbReference>
<dbReference type="PDB" id="3ZXB">
    <property type="method" value="X-ray"/>
    <property type="resolution" value="2.55 A"/>
    <property type="chains" value="A/B/C/D=20-97"/>
</dbReference>
<dbReference type="PDB" id="3ZXC">
    <property type="method" value="X-ray"/>
    <property type="resolution" value="1.40 A"/>
    <property type="chains" value="A/B=20-97"/>
</dbReference>
<dbReference type="PDBsum" id="3ZXB"/>
<dbReference type="PDBsum" id="3ZXC"/>
<dbReference type="SMR" id="G4V4F9"/>
<dbReference type="iPTMnet" id="G4V4F9"/>
<dbReference type="EvolutionaryTrace" id="G4V4F9"/>
<dbReference type="GO" id="GO:0005576">
    <property type="term" value="C:extracellular region"/>
    <property type="evidence" value="ECO:0007669"/>
    <property type="project" value="UniProtKB-SubCell"/>
</dbReference>
<dbReference type="GO" id="GO:0005520">
    <property type="term" value="F:insulin-like growth factor binding"/>
    <property type="evidence" value="ECO:0007669"/>
    <property type="project" value="InterPro"/>
</dbReference>
<dbReference type="GO" id="GO:0045087">
    <property type="term" value="P:innate immune response"/>
    <property type="evidence" value="ECO:0007669"/>
    <property type="project" value="UniProtKB-KW"/>
</dbReference>
<dbReference type="GO" id="GO:0001558">
    <property type="term" value="P:regulation of cell growth"/>
    <property type="evidence" value="ECO:0007669"/>
    <property type="project" value="InterPro"/>
</dbReference>
<dbReference type="GO" id="GO:0009966">
    <property type="term" value="P:regulation of signal transduction"/>
    <property type="evidence" value="ECO:0007669"/>
    <property type="project" value="TreeGrafter"/>
</dbReference>
<dbReference type="Gene3D" id="4.10.40.20">
    <property type="match status" value="1"/>
</dbReference>
<dbReference type="InterPro" id="IPR009030">
    <property type="entry name" value="Growth_fac_rcpt_cys_sf"/>
</dbReference>
<dbReference type="InterPro" id="IPR000867">
    <property type="entry name" value="IGFBP-like"/>
</dbReference>
<dbReference type="InterPro" id="IPR011390">
    <property type="entry name" value="IGFBP_rP_mac25"/>
</dbReference>
<dbReference type="PANTHER" id="PTHR14186:SF20">
    <property type="entry name" value="CYSTEINE-RICH MOTOR NEURON 1 PROTEIN-LIKE"/>
    <property type="match status" value="1"/>
</dbReference>
<dbReference type="PANTHER" id="PTHR14186">
    <property type="entry name" value="INSULIN-LIKE GROWTH FACTOR BINDING PROTEIN-RELATED"/>
    <property type="match status" value="1"/>
</dbReference>
<dbReference type="SMART" id="SM00121">
    <property type="entry name" value="IB"/>
    <property type="match status" value="1"/>
</dbReference>
<dbReference type="SUPFAM" id="SSF57184">
    <property type="entry name" value="Growth factor receptor domain"/>
    <property type="match status" value="1"/>
</dbReference>
<dbReference type="PROSITE" id="PS51323">
    <property type="entry name" value="IGFBP_N_2"/>
    <property type="match status" value="1"/>
</dbReference>
<proteinExistence type="evidence at protein level"/>